<sequence length="307" mass="34241">MNKKDHLRKDEEVSTTNSLVAGSLSGLFARTCIAPLDTVKIKLQVTPHNKNANVLINILKREGIRGFWKGNVPGSIMYIIYGGAQFGSYTYIGSFLRGGLDLNISPQLYSCLVGSLAGMTSSLASYPFDVLRTRFAANSQGQLIKLRDEIMAIWSHEGLMGFFSGCGSSMINIGLNTAIMFGVYESIKIFTEERSKLSDRRDPFTLLNELAGPISGFTSKLATFPLDTVRRRIQIRNSPNEERHDREFTKDIYKSYKNRRFLGVGISMVQQEGPLSLYRGVTMSLIKSVPSTAISLWSYELFMNKLG</sequence>
<keyword id="KW-0472">Membrane</keyword>
<keyword id="KW-0496">Mitochondrion</keyword>
<keyword id="KW-0999">Mitochondrion inner membrane</keyword>
<keyword id="KW-1185">Reference proteome</keyword>
<keyword id="KW-0677">Repeat</keyword>
<keyword id="KW-0812">Transmembrane</keyword>
<keyword id="KW-1133">Transmembrane helix</keyword>
<keyword id="KW-0813">Transport</keyword>
<accession>Q6FTE5</accession>
<name>TPC1_CANGA</name>
<protein>
    <recommendedName>
        <fullName>Mitochondrial thiamine pyrophosphate carrier 1</fullName>
    </recommendedName>
</protein>
<dbReference type="EMBL" id="CR380953">
    <property type="protein sequence ID" value="CAG59426.1"/>
    <property type="molecule type" value="Genomic_DNA"/>
</dbReference>
<dbReference type="RefSeq" id="XP_446499.1">
    <property type="nucleotide sequence ID" value="XM_446499.1"/>
</dbReference>
<dbReference type="SMR" id="Q6FTE5"/>
<dbReference type="FunCoup" id="Q6FTE5">
    <property type="interactions" value="45"/>
</dbReference>
<dbReference type="STRING" id="284593.Q6FTE5"/>
<dbReference type="EnsemblFungi" id="CAGL0G03135g-T">
    <property type="protein sequence ID" value="CAGL0G03135g-T-p1"/>
    <property type="gene ID" value="CAGL0G03135g"/>
</dbReference>
<dbReference type="KEGG" id="cgr:2888325"/>
<dbReference type="CGD" id="CAL0130807">
    <property type="gene designation" value="CAGL0G03135g"/>
</dbReference>
<dbReference type="VEuPathDB" id="FungiDB:B1J91_G03135g"/>
<dbReference type="VEuPathDB" id="FungiDB:CAGL0G03135g"/>
<dbReference type="eggNOG" id="KOG0752">
    <property type="taxonomic scope" value="Eukaryota"/>
</dbReference>
<dbReference type="HOGENOM" id="CLU_015166_10_3_1"/>
<dbReference type="InParanoid" id="Q6FTE5"/>
<dbReference type="Proteomes" id="UP000002428">
    <property type="component" value="Chromosome G"/>
</dbReference>
<dbReference type="GO" id="GO:0005743">
    <property type="term" value="C:mitochondrial inner membrane"/>
    <property type="evidence" value="ECO:0007669"/>
    <property type="project" value="UniProtKB-SubCell"/>
</dbReference>
<dbReference type="GO" id="GO:0090422">
    <property type="term" value="F:thiamine pyrophosphate transmembrane transporter activity"/>
    <property type="evidence" value="ECO:0007669"/>
    <property type="project" value="EnsemblFungi"/>
</dbReference>
<dbReference type="GO" id="GO:1990545">
    <property type="term" value="P:mitochondrial thiamine pyrophosphate transmembrane transport"/>
    <property type="evidence" value="ECO:0007669"/>
    <property type="project" value="EnsemblFungi"/>
</dbReference>
<dbReference type="Gene3D" id="1.50.40.10">
    <property type="entry name" value="Mitochondrial carrier domain"/>
    <property type="match status" value="1"/>
</dbReference>
<dbReference type="InterPro" id="IPR002067">
    <property type="entry name" value="Mit_carrier"/>
</dbReference>
<dbReference type="InterPro" id="IPR018108">
    <property type="entry name" value="Mitochondrial_sb/sol_carrier"/>
</dbReference>
<dbReference type="InterPro" id="IPR023395">
    <property type="entry name" value="Mt_carrier_dom_sf"/>
</dbReference>
<dbReference type="PANTHER" id="PTHR24089">
    <property type="entry name" value="SOLUTE CARRIER FAMILY 25"/>
    <property type="match status" value="1"/>
</dbReference>
<dbReference type="Pfam" id="PF00153">
    <property type="entry name" value="Mito_carr"/>
    <property type="match status" value="3"/>
</dbReference>
<dbReference type="PRINTS" id="PR00926">
    <property type="entry name" value="MITOCARRIER"/>
</dbReference>
<dbReference type="SUPFAM" id="SSF103506">
    <property type="entry name" value="Mitochondrial carrier"/>
    <property type="match status" value="1"/>
</dbReference>
<dbReference type="PROSITE" id="PS50920">
    <property type="entry name" value="SOLCAR"/>
    <property type="match status" value="3"/>
</dbReference>
<comment type="function">
    <text evidence="1">Mitochondrial transporter that mediates uptake of thiamine pyrophosphate (ThPP) into mitochondria.</text>
</comment>
<comment type="subcellular location">
    <subcellularLocation>
        <location evidence="1">Mitochondrion inner membrane</location>
        <topology evidence="1">Multi-pass membrane protein</topology>
    </subcellularLocation>
</comment>
<comment type="similarity">
    <text evidence="3">Belongs to the mitochondrial carrier (TC 2.A.29) family.</text>
</comment>
<gene>
    <name type="primary">TPC1</name>
    <name type="ordered locus">CAGL0G03135g</name>
</gene>
<reference key="1">
    <citation type="journal article" date="2004" name="Nature">
        <title>Genome evolution in yeasts.</title>
        <authorList>
            <person name="Dujon B."/>
            <person name="Sherman D."/>
            <person name="Fischer G."/>
            <person name="Durrens P."/>
            <person name="Casaregola S."/>
            <person name="Lafontaine I."/>
            <person name="de Montigny J."/>
            <person name="Marck C."/>
            <person name="Neuveglise C."/>
            <person name="Talla E."/>
            <person name="Goffard N."/>
            <person name="Frangeul L."/>
            <person name="Aigle M."/>
            <person name="Anthouard V."/>
            <person name="Babour A."/>
            <person name="Barbe V."/>
            <person name="Barnay S."/>
            <person name="Blanchin S."/>
            <person name="Beckerich J.-M."/>
            <person name="Beyne E."/>
            <person name="Bleykasten C."/>
            <person name="Boisrame A."/>
            <person name="Boyer J."/>
            <person name="Cattolico L."/>
            <person name="Confanioleri F."/>
            <person name="de Daruvar A."/>
            <person name="Despons L."/>
            <person name="Fabre E."/>
            <person name="Fairhead C."/>
            <person name="Ferry-Dumazet H."/>
            <person name="Groppi A."/>
            <person name="Hantraye F."/>
            <person name="Hennequin C."/>
            <person name="Jauniaux N."/>
            <person name="Joyet P."/>
            <person name="Kachouri R."/>
            <person name="Kerrest A."/>
            <person name="Koszul R."/>
            <person name="Lemaire M."/>
            <person name="Lesur I."/>
            <person name="Ma L."/>
            <person name="Muller H."/>
            <person name="Nicaud J.-M."/>
            <person name="Nikolski M."/>
            <person name="Oztas S."/>
            <person name="Ozier-Kalogeropoulos O."/>
            <person name="Pellenz S."/>
            <person name="Potier S."/>
            <person name="Richard G.-F."/>
            <person name="Straub M.-L."/>
            <person name="Suleau A."/>
            <person name="Swennen D."/>
            <person name="Tekaia F."/>
            <person name="Wesolowski-Louvel M."/>
            <person name="Westhof E."/>
            <person name="Wirth B."/>
            <person name="Zeniou-Meyer M."/>
            <person name="Zivanovic Y."/>
            <person name="Bolotin-Fukuhara M."/>
            <person name="Thierry A."/>
            <person name="Bouchier C."/>
            <person name="Caudron B."/>
            <person name="Scarpelli C."/>
            <person name="Gaillardin C."/>
            <person name="Weissenbach J."/>
            <person name="Wincker P."/>
            <person name="Souciet J.-L."/>
        </authorList>
    </citation>
    <scope>NUCLEOTIDE SEQUENCE [LARGE SCALE GENOMIC DNA]</scope>
    <source>
        <strain>ATCC 2001 / BCRC 20586 / JCM 3761 / NBRC 0622 / NRRL Y-65 / CBS 138</strain>
    </source>
</reference>
<organism>
    <name type="scientific">Candida glabrata (strain ATCC 2001 / BCRC 20586 / JCM 3761 / NBRC 0622 / NRRL Y-65 / CBS 138)</name>
    <name type="common">Yeast</name>
    <name type="synonym">Nakaseomyces glabratus</name>
    <dbReference type="NCBI Taxonomy" id="284593"/>
    <lineage>
        <taxon>Eukaryota</taxon>
        <taxon>Fungi</taxon>
        <taxon>Dikarya</taxon>
        <taxon>Ascomycota</taxon>
        <taxon>Saccharomycotina</taxon>
        <taxon>Saccharomycetes</taxon>
        <taxon>Saccharomycetales</taxon>
        <taxon>Saccharomycetaceae</taxon>
        <taxon>Nakaseomyces</taxon>
    </lineage>
</organism>
<feature type="chain" id="PRO_0000320461" description="Mitochondrial thiamine pyrophosphate carrier 1">
    <location>
        <begin position="1"/>
        <end position="307"/>
    </location>
</feature>
<feature type="transmembrane region" description="Helical; Name=1" evidence="2">
    <location>
        <begin position="19"/>
        <end position="36"/>
    </location>
</feature>
<feature type="transmembrane region" description="Helical; Name=2" evidence="2">
    <location>
        <begin position="76"/>
        <end position="96"/>
    </location>
</feature>
<feature type="transmembrane region" description="Helical; Name=3" evidence="2">
    <location>
        <begin position="108"/>
        <end position="126"/>
    </location>
</feature>
<feature type="transmembrane region" description="Helical; Name=4" evidence="2">
    <location>
        <begin position="160"/>
        <end position="184"/>
    </location>
</feature>
<feature type="transmembrane region" description="Helical; Name=5" evidence="2">
    <location>
        <begin position="210"/>
        <end position="226"/>
    </location>
</feature>
<feature type="transmembrane region" description="Helical; Name=6" evidence="2">
    <location>
        <begin position="280"/>
        <end position="297"/>
    </location>
</feature>
<feature type="repeat" description="Solcar 1">
    <location>
        <begin position="13"/>
        <end position="95"/>
    </location>
</feature>
<feature type="repeat" description="Solcar 2">
    <location>
        <begin position="105"/>
        <end position="190"/>
    </location>
</feature>
<feature type="repeat" description="Solcar 3">
    <location>
        <begin position="203"/>
        <end position="305"/>
    </location>
</feature>
<proteinExistence type="inferred from homology"/>
<evidence type="ECO:0000250" key="1"/>
<evidence type="ECO:0000255" key="2"/>
<evidence type="ECO:0000305" key="3"/>